<comment type="function">
    <text evidence="1">Nucleoside triphosphate pyrophosphatase that hydrolyzes dTTP and UTP. May have a dual role in cell division arrest and in preventing the incorporation of modified nucleotides into cellular nucleic acids.</text>
</comment>
<comment type="catalytic activity">
    <reaction evidence="1">
        <text>dTTP + H2O = dTMP + diphosphate + H(+)</text>
        <dbReference type="Rhea" id="RHEA:28534"/>
        <dbReference type="ChEBI" id="CHEBI:15377"/>
        <dbReference type="ChEBI" id="CHEBI:15378"/>
        <dbReference type="ChEBI" id="CHEBI:33019"/>
        <dbReference type="ChEBI" id="CHEBI:37568"/>
        <dbReference type="ChEBI" id="CHEBI:63528"/>
        <dbReference type="EC" id="3.6.1.9"/>
    </reaction>
</comment>
<comment type="catalytic activity">
    <reaction evidence="1">
        <text>UTP + H2O = UMP + diphosphate + H(+)</text>
        <dbReference type="Rhea" id="RHEA:29395"/>
        <dbReference type="ChEBI" id="CHEBI:15377"/>
        <dbReference type="ChEBI" id="CHEBI:15378"/>
        <dbReference type="ChEBI" id="CHEBI:33019"/>
        <dbReference type="ChEBI" id="CHEBI:46398"/>
        <dbReference type="ChEBI" id="CHEBI:57865"/>
        <dbReference type="EC" id="3.6.1.9"/>
    </reaction>
</comment>
<comment type="cofactor">
    <cofactor evidence="1">
        <name>a divalent metal cation</name>
        <dbReference type="ChEBI" id="CHEBI:60240"/>
    </cofactor>
</comment>
<comment type="subcellular location">
    <subcellularLocation>
        <location evidence="1">Cytoplasm</location>
    </subcellularLocation>
</comment>
<comment type="similarity">
    <text evidence="1">Belongs to the Maf family. YhdE subfamily.</text>
</comment>
<organism>
    <name type="scientific">Brucella suis biovar 1 (strain 1330)</name>
    <dbReference type="NCBI Taxonomy" id="204722"/>
    <lineage>
        <taxon>Bacteria</taxon>
        <taxon>Pseudomonadati</taxon>
        <taxon>Pseudomonadota</taxon>
        <taxon>Alphaproteobacteria</taxon>
        <taxon>Hyphomicrobiales</taxon>
        <taxon>Brucellaceae</taxon>
        <taxon>Brucella/Ochrobactrum group</taxon>
        <taxon>Brucella</taxon>
    </lineage>
</organism>
<evidence type="ECO:0000255" key="1">
    <source>
        <dbReference type="HAMAP-Rule" id="MF_00528"/>
    </source>
</evidence>
<evidence type="ECO:0000256" key="2">
    <source>
        <dbReference type="SAM" id="MobiDB-lite"/>
    </source>
</evidence>
<proteinExistence type="inferred from homology"/>
<dbReference type="EC" id="3.6.1.9" evidence="1"/>
<dbReference type="EMBL" id="AE014291">
    <property type="protein sequence ID" value="AAN29197.1"/>
    <property type="molecule type" value="Genomic_DNA"/>
</dbReference>
<dbReference type="EMBL" id="CP002997">
    <property type="protein sequence ID" value="AEM17610.1"/>
    <property type="molecule type" value="Genomic_DNA"/>
</dbReference>
<dbReference type="RefSeq" id="WP_002965530.1">
    <property type="nucleotide sequence ID" value="NZ_KN046804.1"/>
</dbReference>
<dbReference type="SMR" id="Q8G2R6"/>
<dbReference type="KEGG" id="bms:BR0248"/>
<dbReference type="KEGG" id="bsi:BS1330_I0249"/>
<dbReference type="PATRIC" id="fig|204722.21.peg.1037"/>
<dbReference type="HOGENOM" id="CLU_040416_2_0_5"/>
<dbReference type="PhylomeDB" id="Q8G2R6"/>
<dbReference type="Proteomes" id="UP000007104">
    <property type="component" value="Chromosome I"/>
</dbReference>
<dbReference type="GO" id="GO:0005737">
    <property type="term" value="C:cytoplasm"/>
    <property type="evidence" value="ECO:0007669"/>
    <property type="project" value="UniProtKB-SubCell"/>
</dbReference>
<dbReference type="GO" id="GO:0036218">
    <property type="term" value="F:dTTP diphosphatase activity"/>
    <property type="evidence" value="ECO:0007669"/>
    <property type="project" value="RHEA"/>
</dbReference>
<dbReference type="GO" id="GO:0036221">
    <property type="term" value="F:UTP diphosphatase activity"/>
    <property type="evidence" value="ECO:0007669"/>
    <property type="project" value="RHEA"/>
</dbReference>
<dbReference type="GO" id="GO:0009117">
    <property type="term" value="P:nucleotide metabolic process"/>
    <property type="evidence" value="ECO:0007669"/>
    <property type="project" value="UniProtKB-KW"/>
</dbReference>
<dbReference type="CDD" id="cd00555">
    <property type="entry name" value="Maf"/>
    <property type="match status" value="1"/>
</dbReference>
<dbReference type="Gene3D" id="3.90.950.10">
    <property type="match status" value="1"/>
</dbReference>
<dbReference type="HAMAP" id="MF_00528">
    <property type="entry name" value="Maf"/>
    <property type="match status" value="1"/>
</dbReference>
<dbReference type="InterPro" id="IPR029001">
    <property type="entry name" value="ITPase-like_fam"/>
</dbReference>
<dbReference type="InterPro" id="IPR003697">
    <property type="entry name" value="Maf-like"/>
</dbReference>
<dbReference type="NCBIfam" id="TIGR00172">
    <property type="entry name" value="maf"/>
    <property type="match status" value="1"/>
</dbReference>
<dbReference type="NCBIfam" id="NF002401">
    <property type="entry name" value="PRK01441.1"/>
    <property type="match status" value="1"/>
</dbReference>
<dbReference type="PANTHER" id="PTHR43213">
    <property type="entry name" value="BIFUNCTIONAL DTTP/UTP PYROPHOSPHATASE/METHYLTRANSFERASE PROTEIN-RELATED"/>
    <property type="match status" value="1"/>
</dbReference>
<dbReference type="PANTHER" id="PTHR43213:SF5">
    <property type="entry name" value="BIFUNCTIONAL DTTP_UTP PYROPHOSPHATASE_METHYLTRANSFERASE PROTEIN-RELATED"/>
    <property type="match status" value="1"/>
</dbReference>
<dbReference type="Pfam" id="PF02545">
    <property type="entry name" value="Maf"/>
    <property type="match status" value="1"/>
</dbReference>
<dbReference type="PIRSF" id="PIRSF006305">
    <property type="entry name" value="Maf"/>
    <property type="match status" value="1"/>
</dbReference>
<dbReference type="SUPFAM" id="SSF52972">
    <property type="entry name" value="ITPase-like"/>
    <property type="match status" value="1"/>
</dbReference>
<name>NTPPA_BRUSU</name>
<protein>
    <recommendedName>
        <fullName evidence="1">dTTP/UTP pyrophosphatase</fullName>
        <shortName evidence="1">dTTPase/UTPase</shortName>
        <ecNumber evidence="1">3.6.1.9</ecNumber>
    </recommendedName>
    <alternativeName>
        <fullName evidence="1">Nucleoside triphosphate pyrophosphatase</fullName>
    </alternativeName>
    <alternativeName>
        <fullName evidence="1">Nucleotide pyrophosphatase</fullName>
        <shortName evidence="1">Nucleotide PPase</shortName>
    </alternativeName>
</protein>
<gene>
    <name type="primary">maf-1</name>
    <name type="synonym">maf</name>
    <name type="ordered locus">BR0248</name>
    <name type="ordered locus">BS1330_I0249</name>
</gene>
<reference key="1">
    <citation type="journal article" date="2002" name="Proc. Natl. Acad. Sci. U.S.A.">
        <title>The Brucella suis genome reveals fundamental similarities between animal and plant pathogens and symbionts.</title>
        <authorList>
            <person name="Paulsen I.T."/>
            <person name="Seshadri R."/>
            <person name="Nelson K.E."/>
            <person name="Eisen J.A."/>
            <person name="Heidelberg J.F."/>
            <person name="Read T.D."/>
            <person name="Dodson R.J."/>
            <person name="Umayam L.A."/>
            <person name="Brinkac L.M."/>
            <person name="Beanan M.J."/>
            <person name="Daugherty S.C."/>
            <person name="DeBoy R.T."/>
            <person name="Durkin A.S."/>
            <person name="Kolonay J.F."/>
            <person name="Madupu R."/>
            <person name="Nelson W.C."/>
            <person name="Ayodeji B."/>
            <person name="Kraul M."/>
            <person name="Shetty J."/>
            <person name="Malek J.A."/>
            <person name="Van Aken S.E."/>
            <person name="Riedmuller S."/>
            <person name="Tettelin H."/>
            <person name="Gill S.R."/>
            <person name="White O."/>
            <person name="Salzberg S.L."/>
            <person name="Hoover D.L."/>
            <person name="Lindler L.E."/>
            <person name="Halling S.M."/>
            <person name="Boyle S.M."/>
            <person name="Fraser C.M."/>
        </authorList>
    </citation>
    <scope>NUCLEOTIDE SEQUENCE [LARGE SCALE GENOMIC DNA]</scope>
    <source>
        <strain>1330</strain>
    </source>
</reference>
<reference key="2">
    <citation type="journal article" date="2011" name="J. Bacteriol.">
        <title>Revised genome sequence of Brucella suis 1330.</title>
        <authorList>
            <person name="Tae H."/>
            <person name="Shallom S."/>
            <person name="Settlage R."/>
            <person name="Preston D."/>
            <person name="Adams L.G."/>
            <person name="Garner H.R."/>
        </authorList>
    </citation>
    <scope>NUCLEOTIDE SEQUENCE [LARGE SCALE GENOMIC DNA]</scope>
    <source>
        <strain>1330</strain>
    </source>
</reference>
<feature type="chain" id="PRO_0000123003" description="dTTP/UTP pyrophosphatase">
    <location>
        <begin position="1"/>
        <end position="208"/>
    </location>
</feature>
<feature type="region of interest" description="Disordered" evidence="2">
    <location>
        <begin position="28"/>
        <end position="48"/>
    </location>
</feature>
<feature type="active site" description="Proton acceptor" evidence="1">
    <location>
        <position position="79"/>
    </location>
</feature>
<feature type="site" description="Important for substrate specificity" evidence="1">
    <location>
        <position position="15"/>
    </location>
</feature>
<feature type="site" description="Important for substrate specificity" evidence="1">
    <location>
        <position position="80"/>
    </location>
</feature>
<feature type="site" description="Important for substrate specificity" evidence="1">
    <location>
        <position position="163"/>
    </location>
</feature>
<keyword id="KW-0963">Cytoplasm</keyword>
<keyword id="KW-0378">Hydrolase</keyword>
<keyword id="KW-0546">Nucleotide metabolism</keyword>
<accession>Q8G2R6</accession>
<accession>G0KBU7</accession>
<sequence length="208" mass="22639">MNVQHKLVLASGSPRRIELLGQAGIEPDRIHPADIDETPQRAEHPRSLARRLSRDKARKAHEQLQGEAGFSGALVLAADTVVAVGRRILPKAEIEDEARECLRLLSGRTHKVFTGVCLVLPNGNLRQTLVETRLRFERLSRLQINAYLSSGEWRGKAGGYAIQGLAGSFVVKLVGSYTNVVGLPLQETVGLLADGGYPVYANWGTGKV</sequence>